<evidence type="ECO:0000255" key="1">
    <source>
        <dbReference type="HAMAP-Rule" id="MF_01028"/>
    </source>
</evidence>
<evidence type="ECO:0000255" key="2">
    <source>
        <dbReference type="PROSITE-ProRule" id="PRU01151"/>
    </source>
</evidence>
<protein>
    <recommendedName>
        <fullName evidence="1">Putative (R)-citramalate synthase CimA</fullName>
        <ecNumber evidence="1">2.3.3.21</ecNumber>
    </recommendedName>
</protein>
<reference key="1">
    <citation type="journal article" date="2002" name="Genome Res.">
        <title>The genome of Methanosarcina acetivorans reveals extensive metabolic and physiological diversity.</title>
        <authorList>
            <person name="Galagan J.E."/>
            <person name="Nusbaum C."/>
            <person name="Roy A."/>
            <person name="Endrizzi M.G."/>
            <person name="Macdonald P."/>
            <person name="FitzHugh W."/>
            <person name="Calvo S."/>
            <person name="Engels R."/>
            <person name="Smirnov S."/>
            <person name="Atnoor D."/>
            <person name="Brown A."/>
            <person name="Allen N."/>
            <person name="Naylor J."/>
            <person name="Stange-Thomann N."/>
            <person name="DeArellano K."/>
            <person name="Johnson R."/>
            <person name="Linton L."/>
            <person name="McEwan P."/>
            <person name="McKernan K."/>
            <person name="Talamas J."/>
            <person name="Tirrell A."/>
            <person name="Ye W."/>
            <person name="Zimmer A."/>
            <person name="Barber R.D."/>
            <person name="Cann I."/>
            <person name="Graham D.E."/>
            <person name="Grahame D.A."/>
            <person name="Guss A.M."/>
            <person name="Hedderich R."/>
            <person name="Ingram-Smith C."/>
            <person name="Kuettner H.C."/>
            <person name="Krzycki J.A."/>
            <person name="Leigh J.A."/>
            <person name="Li W."/>
            <person name="Liu J."/>
            <person name="Mukhopadhyay B."/>
            <person name="Reeve J.N."/>
            <person name="Smith K."/>
            <person name="Springer T.A."/>
            <person name="Umayam L.A."/>
            <person name="White O."/>
            <person name="White R.H."/>
            <person name="de Macario E.C."/>
            <person name="Ferry J.G."/>
            <person name="Jarrell K.F."/>
            <person name="Jing H."/>
            <person name="Macario A.J.L."/>
            <person name="Paulsen I.T."/>
            <person name="Pritchett M."/>
            <person name="Sowers K.R."/>
            <person name="Swanson R.V."/>
            <person name="Zinder S.H."/>
            <person name="Lander E."/>
            <person name="Metcalf W.W."/>
            <person name="Birren B."/>
        </authorList>
    </citation>
    <scope>NUCLEOTIDE SEQUENCE [LARGE SCALE GENOMIC DNA]</scope>
    <source>
        <strain>ATCC 35395 / DSM 2834 / JCM 12185 / C2A</strain>
    </source>
</reference>
<feature type="chain" id="PRO_0000140449" description="Putative (R)-citramalate synthase CimA">
    <location>
        <begin position="1"/>
        <end position="483"/>
    </location>
</feature>
<feature type="domain" description="Pyruvate carboxyltransferase" evidence="2">
    <location>
        <begin position="1"/>
        <end position="245"/>
    </location>
</feature>
<accession>Q8TJJ1</accession>
<name>CIMA_METAC</name>
<gene>
    <name evidence="1" type="primary">cimA</name>
    <name type="ordered locus">MA_3793</name>
</gene>
<comment type="function">
    <text evidence="1">Catalyzes the condensation of pyruvate and acetyl-coenzyme A to form (R)-citramalate.</text>
</comment>
<comment type="catalytic activity">
    <reaction evidence="1">
        <text>pyruvate + acetyl-CoA + H2O = (3R)-citramalate + CoA + H(+)</text>
        <dbReference type="Rhea" id="RHEA:19045"/>
        <dbReference type="ChEBI" id="CHEBI:15361"/>
        <dbReference type="ChEBI" id="CHEBI:15377"/>
        <dbReference type="ChEBI" id="CHEBI:15378"/>
        <dbReference type="ChEBI" id="CHEBI:30934"/>
        <dbReference type="ChEBI" id="CHEBI:57287"/>
        <dbReference type="ChEBI" id="CHEBI:57288"/>
        <dbReference type="EC" id="2.3.3.21"/>
    </reaction>
</comment>
<comment type="pathway">
    <text evidence="1">Amino-acid biosynthesis; L-isoleucine biosynthesis; 2-oxobutanoate from pyruvate: step 1/3.</text>
</comment>
<comment type="subunit">
    <text evidence="1">Homodimer.</text>
</comment>
<comment type="similarity">
    <text evidence="1">Belongs to the alpha-IPM synthase/homocitrate synthase family.</text>
</comment>
<keyword id="KW-0028">Amino-acid biosynthesis</keyword>
<keyword id="KW-0100">Branched-chain amino acid biosynthesis</keyword>
<keyword id="KW-0412">Isoleucine biosynthesis</keyword>
<keyword id="KW-1185">Reference proteome</keyword>
<keyword id="KW-0808">Transferase</keyword>
<dbReference type="EC" id="2.3.3.21" evidence="1"/>
<dbReference type="EMBL" id="AE010299">
    <property type="protein sequence ID" value="AAM07144.1"/>
    <property type="molecule type" value="Genomic_DNA"/>
</dbReference>
<dbReference type="SMR" id="Q8TJJ1"/>
<dbReference type="FunCoup" id="Q8TJJ1">
    <property type="interactions" value="211"/>
</dbReference>
<dbReference type="STRING" id="188937.MA_3793"/>
<dbReference type="EnsemblBacteria" id="AAM07144">
    <property type="protein sequence ID" value="AAM07144"/>
    <property type="gene ID" value="MA_3793"/>
</dbReference>
<dbReference type="KEGG" id="mac:MA_3793"/>
<dbReference type="HOGENOM" id="CLU_022158_0_1_2"/>
<dbReference type="InParanoid" id="Q8TJJ1"/>
<dbReference type="PhylomeDB" id="Q8TJJ1"/>
<dbReference type="UniPathway" id="UPA00047">
    <property type="reaction ID" value="UER00066"/>
</dbReference>
<dbReference type="Proteomes" id="UP000002487">
    <property type="component" value="Chromosome"/>
</dbReference>
<dbReference type="GO" id="GO:0043714">
    <property type="term" value="F:(R)-citramalate synthase activity"/>
    <property type="evidence" value="ECO:0007669"/>
    <property type="project" value="InterPro"/>
</dbReference>
<dbReference type="GO" id="GO:0003852">
    <property type="term" value="F:2-isopropylmalate synthase activity"/>
    <property type="evidence" value="ECO:0007669"/>
    <property type="project" value="InterPro"/>
</dbReference>
<dbReference type="GO" id="GO:0009097">
    <property type="term" value="P:isoleucine biosynthetic process"/>
    <property type="evidence" value="ECO:0007669"/>
    <property type="project" value="UniProtKB-UniRule"/>
</dbReference>
<dbReference type="GO" id="GO:0009098">
    <property type="term" value="P:L-leucine biosynthetic process"/>
    <property type="evidence" value="ECO:0007669"/>
    <property type="project" value="InterPro"/>
</dbReference>
<dbReference type="CDD" id="cd07940">
    <property type="entry name" value="DRE_TIM_IPMS"/>
    <property type="match status" value="1"/>
</dbReference>
<dbReference type="FunFam" id="1.10.238.260:FF:000001">
    <property type="entry name" value="2-isopropylmalate synthase"/>
    <property type="match status" value="1"/>
</dbReference>
<dbReference type="FunFam" id="3.20.20.70:FF:000010">
    <property type="entry name" value="2-isopropylmalate synthase"/>
    <property type="match status" value="1"/>
</dbReference>
<dbReference type="FunFam" id="3.30.160.270:FF:000003">
    <property type="entry name" value="2-isopropylmalate synthase"/>
    <property type="match status" value="1"/>
</dbReference>
<dbReference type="Gene3D" id="1.10.238.260">
    <property type="match status" value="1"/>
</dbReference>
<dbReference type="Gene3D" id="3.30.160.270">
    <property type="match status" value="1"/>
</dbReference>
<dbReference type="Gene3D" id="3.20.20.70">
    <property type="entry name" value="Aldolase class I"/>
    <property type="match status" value="1"/>
</dbReference>
<dbReference type="HAMAP" id="MF_01028">
    <property type="entry name" value="CimA"/>
    <property type="match status" value="1"/>
</dbReference>
<dbReference type="InterPro" id="IPR013709">
    <property type="entry name" value="2-isopropylmalate_synth_dimer"/>
</dbReference>
<dbReference type="InterPro" id="IPR002034">
    <property type="entry name" value="AIPM/Hcit_synth_CS"/>
</dbReference>
<dbReference type="InterPro" id="IPR013785">
    <property type="entry name" value="Aldolase_TIM"/>
</dbReference>
<dbReference type="InterPro" id="IPR024890">
    <property type="entry name" value="Citramalate_synthase_CimA"/>
</dbReference>
<dbReference type="InterPro" id="IPR011830">
    <property type="entry name" value="LEU1_arch"/>
</dbReference>
<dbReference type="InterPro" id="IPR054691">
    <property type="entry name" value="LeuA/HCS_post-cat"/>
</dbReference>
<dbReference type="InterPro" id="IPR036230">
    <property type="entry name" value="LeuA_allosteric_dom_sf"/>
</dbReference>
<dbReference type="InterPro" id="IPR000891">
    <property type="entry name" value="PYR_CT"/>
</dbReference>
<dbReference type="NCBIfam" id="TIGR02090">
    <property type="entry name" value="LEU1_arch"/>
    <property type="match status" value="1"/>
</dbReference>
<dbReference type="NCBIfam" id="NF002085">
    <property type="entry name" value="PRK00915.1-2"/>
    <property type="match status" value="1"/>
</dbReference>
<dbReference type="PANTHER" id="PTHR42880:SF2">
    <property type="entry name" value="(R)-CITRAMALATE SYNTHASE CIMA"/>
    <property type="match status" value="1"/>
</dbReference>
<dbReference type="PANTHER" id="PTHR42880">
    <property type="entry name" value="HOMOCITRATE SYNTHASE"/>
    <property type="match status" value="1"/>
</dbReference>
<dbReference type="Pfam" id="PF22617">
    <property type="entry name" value="HCS_D2"/>
    <property type="match status" value="1"/>
</dbReference>
<dbReference type="Pfam" id="PF00682">
    <property type="entry name" value="HMGL-like"/>
    <property type="match status" value="1"/>
</dbReference>
<dbReference type="Pfam" id="PF08502">
    <property type="entry name" value="LeuA_dimer"/>
    <property type="match status" value="1"/>
</dbReference>
<dbReference type="SMART" id="SM00917">
    <property type="entry name" value="LeuA_dimer"/>
    <property type="match status" value="1"/>
</dbReference>
<dbReference type="SUPFAM" id="SSF110921">
    <property type="entry name" value="2-isopropylmalate synthase LeuA, allosteric (dimerisation) domain"/>
    <property type="match status" value="1"/>
</dbReference>
<dbReference type="SUPFAM" id="SSF51569">
    <property type="entry name" value="Aldolase"/>
    <property type="match status" value="1"/>
</dbReference>
<dbReference type="PROSITE" id="PS00816">
    <property type="entry name" value="AIPM_HOMOCIT_SYNTH_2"/>
    <property type="match status" value="1"/>
</dbReference>
<dbReference type="PROSITE" id="PS50991">
    <property type="entry name" value="PYR_CT"/>
    <property type="match status" value="1"/>
</dbReference>
<sequence length="483" mass="52274">MRDGEQTPGVALTREKKLLIARALDEMRINVIEAGSAITSAGERESIKAVANAGLDAEICSYCRIVKMDVDHALECDVDSIHLVAPVSDLHIKTKIKKDRDTVRQIAAEVTEYAKDHGLIVELSGEDASRADPEFLKAIYSDGIDAGADRLCFCDTVGLLVPEKTTEIFRDLSSSLKAPISIHCHNDFGLATANTVAALAAGAKQSHVTINGLGERAGNASLEEVVMSLEWLYKYDTGIKHEQIYRTSRLVSRLTGIPVSPNKALVGGNAFTHEAGIHVHGLLADKSTYEPMSPEYIGRQRQIVLGKHAGRSSITLALKEMGLEADEAQTEEIFNRVKQMGDQGKHITDADLQTIAETVLDIYKEPIVKLEEFTIVSGNRVTPTASIKLNVKDKEIVQAGIGNGPVDAVINAIRRAVSSCAEDVVLEEYHVDSITGGTDALVEVRVKLSKNGKVITASGARTDIIMASVEAVMNGMNRLIREE</sequence>
<organism>
    <name type="scientific">Methanosarcina acetivorans (strain ATCC 35395 / DSM 2834 / JCM 12185 / C2A)</name>
    <dbReference type="NCBI Taxonomy" id="188937"/>
    <lineage>
        <taxon>Archaea</taxon>
        <taxon>Methanobacteriati</taxon>
        <taxon>Methanobacteriota</taxon>
        <taxon>Stenosarchaea group</taxon>
        <taxon>Methanomicrobia</taxon>
        <taxon>Methanosarcinales</taxon>
        <taxon>Methanosarcinaceae</taxon>
        <taxon>Methanosarcina</taxon>
    </lineage>
</organism>
<proteinExistence type="inferred from homology"/>